<accession>P27034</accession>
<feature type="chain" id="PRO_0000210775" description="Beta-glucosidase">
    <location>
        <begin position="1"/>
        <end position="818"/>
    </location>
</feature>
<feature type="domain" description="PA14" evidence="2">
    <location>
        <begin position="386"/>
        <end position="538"/>
    </location>
</feature>
<feature type="active site" evidence="1">
    <location>
        <position position="222"/>
    </location>
</feature>
<reference key="1">
    <citation type="journal article" date="1992" name="J. Bacteriol.">
        <title>Cloning and sequencing of an Agrobacterium tumefaciens beta-glucosidase gene involved in modifying a vir-inducing plant signal molecule.</title>
        <authorList>
            <person name="Castle L.A."/>
            <person name="Smith K.D."/>
            <person name="Morris R.O."/>
        </authorList>
    </citation>
    <scope>NUCLEOTIDE SEQUENCE [GENOMIC DNA]</scope>
    <source>
        <strain>B3/73</strain>
    </source>
</reference>
<dbReference type="EC" id="3.2.1.21"/>
<dbReference type="EMBL" id="M59852">
    <property type="protein sequence ID" value="AAA22082.1"/>
    <property type="molecule type" value="Genomic_DNA"/>
</dbReference>
<dbReference type="PIR" id="A42292">
    <property type="entry name" value="A42292"/>
</dbReference>
<dbReference type="SMR" id="P27034"/>
<dbReference type="BindingDB" id="P27034"/>
<dbReference type="ChEMBL" id="CHEMBL4663"/>
<dbReference type="CAZy" id="GH3">
    <property type="family name" value="Glycoside Hydrolase Family 3"/>
</dbReference>
<dbReference type="GO" id="GO:0005737">
    <property type="term" value="C:cytoplasm"/>
    <property type="evidence" value="ECO:0007669"/>
    <property type="project" value="UniProtKB-SubCell"/>
</dbReference>
<dbReference type="GO" id="GO:0008422">
    <property type="term" value="F:beta-glucosidase activity"/>
    <property type="evidence" value="ECO:0007669"/>
    <property type="project" value="UniProtKB-EC"/>
</dbReference>
<dbReference type="GO" id="GO:0009251">
    <property type="term" value="P:glucan catabolic process"/>
    <property type="evidence" value="ECO:0007669"/>
    <property type="project" value="TreeGrafter"/>
</dbReference>
<dbReference type="FunFam" id="2.60.40.10:FF:000495">
    <property type="entry name" value="Periplasmic beta-glucosidase"/>
    <property type="match status" value="1"/>
</dbReference>
<dbReference type="Gene3D" id="2.60.120.260">
    <property type="entry name" value="Galactose-binding domain-like"/>
    <property type="match status" value="1"/>
</dbReference>
<dbReference type="Gene3D" id="3.40.50.1700">
    <property type="entry name" value="Glycoside hydrolase family 3 C-terminal domain"/>
    <property type="match status" value="1"/>
</dbReference>
<dbReference type="Gene3D" id="3.20.20.300">
    <property type="entry name" value="Glycoside hydrolase, family 3, N-terminal domain"/>
    <property type="match status" value="1"/>
</dbReference>
<dbReference type="Gene3D" id="2.60.40.10">
    <property type="entry name" value="Immunoglobulins"/>
    <property type="match status" value="1"/>
</dbReference>
<dbReference type="InterPro" id="IPR050288">
    <property type="entry name" value="Cellulose_deg_GH3"/>
</dbReference>
<dbReference type="InterPro" id="IPR026891">
    <property type="entry name" value="Fn3-like"/>
</dbReference>
<dbReference type="InterPro" id="IPR019800">
    <property type="entry name" value="Glyco_hydro_3_AS"/>
</dbReference>
<dbReference type="InterPro" id="IPR002772">
    <property type="entry name" value="Glyco_hydro_3_C"/>
</dbReference>
<dbReference type="InterPro" id="IPR036881">
    <property type="entry name" value="Glyco_hydro_3_C_sf"/>
</dbReference>
<dbReference type="InterPro" id="IPR001764">
    <property type="entry name" value="Glyco_hydro_3_N"/>
</dbReference>
<dbReference type="InterPro" id="IPR036962">
    <property type="entry name" value="Glyco_hydro_3_N_sf"/>
</dbReference>
<dbReference type="InterPro" id="IPR017853">
    <property type="entry name" value="Glycoside_hydrolase_SF"/>
</dbReference>
<dbReference type="InterPro" id="IPR013783">
    <property type="entry name" value="Ig-like_fold"/>
</dbReference>
<dbReference type="InterPro" id="IPR037524">
    <property type="entry name" value="PA14/GLEYA"/>
</dbReference>
<dbReference type="InterPro" id="IPR011658">
    <property type="entry name" value="PA14_dom"/>
</dbReference>
<dbReference type="PANTHER" id="PTHR42715">
    <property type="entry name" value="BETA-GLUCOSIDASE"/>
    <property type="match status" value="1"/>
</dbReference>
<dbReference type="PANTHER" id="PTHR42715:SF3">
    <property type="entry name" value="BETA-GLUCOSIDASE B-RELATED"/>
    <property type="match status" value="1"/>
</dbReference>
<dbReference type="Pfam" id="PF14310">
    <property type="entry name" value="Fn3-like"/>
    <property type="match status" value="1"/>
</dbReference>
<dbReference type="Pfam" id="PF00933">
    <property type="entry name" value="Glyco_hydro_3"/>
    <property type="match status" value="1"/>
</dbReference>
<dbReference type="Pfam" id="PF01915">
    <property type="entry name" value="Glyco_hydro_3_C"/>
    <property type="match status" value="1"/>
</dbReference>
<dbReference type="Pfam" id="PF07691">
    <property type="entry name" value="PA14"/>
    <property type="match status" value="1"/>
</dbReference>
<dbReference type="PRINTS" id="PR00133">
    <property type="entry name" value="GLHYDRLASE3"/>
</dbReference>
<dbReference type="SMART" id="SM01217">
    <property type="entry name" value="Fn3_like"/>
    <property type="match status" value="1"/>
</dbReference>
<dbReference type="SMART" id="SM00758">
    <property type="entry name" value="PA14"/>
    <property type="match status" value="1"/>
</dbReference>
<dbReference type="SUPFAM" id="SSF51445">
    <property type="entry name" value="(Trans)glycosidases"/>
    <property type="match status" value="1"/>
</dbReference>
<dbReference type="SUPFAM" id="SSF56988">
    <property type="entry name" value="Anthrax protective antigen"/>
    <property type="match status" value="1"/>
</dbReference>
<dbReference type="SUPFAM" id="SSF52279">
    <property type="entry name" value="Beta-D-glucan exohydrolase, C-terminal domain"/>
    <property type="match status" value="1"/>
</dbReference>
<dbReference type="PROSITE" id="PS00775">
    <property type="entry name" value="GLYCOSYL_HYDROL_F3"/>
    <property type="match status" value="1"/>
</dbReference>
<dbReference type="PROSITE" id="PS51820">
    <property type="entry name" value="PA14"/>
    <property type="match status" value="1"/>
</dbReference>
<sequence>MIDDILDKMTLEEQVSLLSGADFWTTVAIERLGVPKIKVTDGPNGARGGGSLVGGVKSACFPVAIALGATWDPELIERAGVALGGQAKSKGASVLLAPTVNIHRSGLNGRNFECYSEDPALTAACAVAYINGVQSQGVAATIKHFVANESEIERQTMSSDVDERTLREIYLPPFEEAVKKAGVKAVMSSYNKLNGTYTSENPWLLTKVLREEWGFDGVVMSDWFGSHSTAETINAGLDLEMPGPWRDRGEKLVAAVREGKVKAETVRASARRILLLLERVGAFEKAPDLAEHALDLPEDRALIRQLGAEGAVLLKNDGVLPLAKSSFDQIAVIGPNAASARVMGGGSARIAAHYTVSPLEGIRAALSNANSLRHAVGCNNNRLIDVFSGEMTVEYFKGRGFESRPVHVETVEKGEFFWFDLPSGDLDLADFSARMTATFVPQETGEHIFGMTNAGLARLFVDGELVVDGYDGWTKGENFFGTANSEQRRAVTLGAARRYRVVVEYEAPKASLDGINICALRFGVEKPLGDAGIAEAVETARKSDIVLLLVGREGEWDTEGLDLPDMRLPGRQEELIEAVAETNPNVVVVLQTGGPIEMPWLGKVRAVLQMWYPGQELGNALADVLFGDVEPAGRLPQTFPKALTDNSAITDDPSIYPGQDGHVRYAEGIFVGYRHHDTREIEPLFPFGFGLGYTRFTWGAPQLSGTEMGADGLTVTVDVTNIGDRAGSDVVQLYVHSPNARVERPFKELRAFAKLKLAPGATGTAVLKIAPRDLAYFDVEAGRFRADAGKYELIVAASAIDIRASVSIHLPVDHVMEP</sequence>
<keyword id="KW-0963">Cytoplasm</keyword>
<keyword id="KW-0326">Glycosidase</keyword>
<keyword id="KW-0378">Hydrolase</keyword>
<proteinExistence type="inferred from homology"/>
<organism>
    <name type="scientific">Rhizobium radiobacter</name>
    <name type="common">Agrobacterium tumefaciens</name>
    <name type="synonym">Agrobacterium radiobacter</name>
    <dbReference type="NCBI Taxonomy" id="358"/>
    <lineage>
        <taxon>Bacteria</taxon>
        <taxon>Pseudomonadati</taxon>
        <taxon>Pseudomonadota</taxon>
        <taxon>Alphaproteobacteria</taxon>
        <taxon>Hyphomicrobiales</taxon>
        <taxon>Rhizobiaceae</taxon>
        <taxon>Rhizobium/Agrobacterium group</taxon>
        <taxon>Agrobacterium</taxon>
        <taxon>Agrobacterium tumefaciens complex</taxon>
    </lineage>
</organism>
<name>BGLS_RHIRD</name>
<evidence type="ECO:0000250" key="1"/>
<evidence type="ECO:0000255" key="2">
    <source>
        <dbReference type="PROSITE-ProRule" id="PRU01164"/>
    </source>
</evidence>
<evidence type="ECO:0000305" key="3"/>
<gene>
    <name type="primary">cbg-1</name>
</gene>
<comment type="function">
    <text>Involved in modifying a vir-inducing plant signal molecule. Hydrolyzes coniferin but not cellobiose.</text>
</comment>
<comment type="catalytic activity">
    <reaction>
        <text>Hydrolysis of terminal, non-reducing beta-D-glucosyl residues with release of beta-D-glucose.</text>
        <dbReference type="EC" id="3.2.1.21"/>
    </reaction>
</comment>
<comment type="subcellular location">
    <subcellularLocation>
        <location evidence="3">Cytoplasm</location>
    </subcellularLocation>
</comment>
<comment type="similarity">
    <text evidence="3">Belongs to the glycosyl hydrolase 3 family.</text>
</comment>
<protein>
    <recommendedName>
        <fullName>Beta-glucosidase</fullName>
        <ecNumber>3.2.1.21</ecNumber>
    </recommendedName>
    <alternativeName>
        <fullName>Beta-D-glucoside glucohydrolase</fullName>
    </alternativeName>
    <alternativeName>
        <fullName>Cellobiase</fullName>
    </alternativeName>
    <alternativeName>
        <fullName>Gentiobiase</fullName>
    </alternativeName>
</protein>